<proteinExistence type="inferred from homology"/>
<comment type="function">
    <text evidence="1">Capsid protein (CA) is the structural component of the virus-like particle (VLP), forming the shell that encapsulates the retrotransposons dimeric RNA genome.</text>
</comment>
<comment type="alternative products">
    <event type="ribosomal frameshifting"/>
    <isoform>
        <id>P47023-1</id>
        <name>Transposon Ty4-J Gag polyprotein</name>
        <sequence type="displayed"/>
    </isoform>
    <isoform>
        <id>P47024-1</id>
        <name>Transposon Ty4-J Gag-Pol polyprotein</name>
        <sequence type="external"/>
    </isoform>
    <text>The Gag-Pol polyprotein is generated by a +1 ribosomal frameshift.</text>
</comment>
<comment type="miscellaneous">
    <text>Retrotransposons are mobile genetic entities that are able to replicate via an RNA intermediate and a reverse transcription step. In contrast to retroviruses, retrotransposons are non-infectious, lack an envelope and remain intracellular. Ty4 retrotransposons belong to the copia elements (pseudoviridae).</text>
</comment>
<comment type="miscellaneous">
    <molecule>Isoform Transposon Ty4-J Gag polyprotein</molecule>
    <text>Produced by conventional translation.</text>
</comment>
<comment type="sequence caution" evidence="4">
    <conflict type="frameshift">
        <sequence resource="EMBL-CDS" id="DAA08687"/>
    </conflict>
</comment>
<feature type="chain" id="PRO_0000203501" description="Transposon Ty4-J Gag polyprotein">
    <location>
        <begin position="1"/>
        <end position="414"/>
    </location>
</feature>
<feature type="region of interest" description="Disordered" evidence="3">
    <location>
        <begin position="378"/>
        <end position="414"/>
    </location>
</feature>
<feature type="coiled-coil region" evidence="2">
    <location>
        <begin position="39"/>
        <end position="115"/>
    </location>
</feature>
<feature type="compositionally biased region" description="Basic and acidic residues" evidence="3">
    <location>
        <begin position="393"/>
        <end position="403"/>
    </location>
</feature>
<feature type="compositionally biased region" description="Polar residues" evidence="3">
    <location>
        <begin position="404"/>
        <end position="414"/>
    </location>
</feature>
<sequence>MATPVRGETRNVIDDNISARIQSKVKTNDTVRQTPSSLRKVSIKDEQVRQYQRNLNRFKTILNGLKAEEEKLSEADDIQMLAEKLLKLGETIDKVENRIVDLVEKIQLLETNENNNILHEHIDATGTYYLFDTLTSTNKRFYPKDCVFDYRTNNVENIPILLNNFKKFIKKYQFDDVFENDIIEIDPRENEILCKIIKEGLGESLDIMNTNTTDIFRIIDGLKKQNIEVCMVEMSELEPGEKVLVDTTCRNSALLMNKLQKLVLMEKWIFSKCCQDCPNLKDYLQEAIMGTLHESLRNSVKQRLYNIPHDVGIDHEEFLINTVIETVIDLSPIADDQIENSCMYCKSVFHCSINCKKKPNRELRPDSTNFSKTYYLQGAQRQQPLKSSAKRTKVLEQDTKKVEQSVQQQKTGNY</sequence>
<protein>
    <recommendedName>
        <fullName>Transposon Ty4-J Gag polyprotein</fullName>
        <shortName>TY4A</shortName>
        <shortName>Transposon Ty4 protein A</shortName>
    </recommendedName>
</protein>
<dbReference type="EMBL" id="X67284">
    <property type="status" value="NOT_ANNOTATED_CDS"/>
    <property type="molecule type" value="Genomic_DNA"/>
</dbReference>
<dbReference type="EMBL" id="Z49389">
    <property type="protein sequence ID" value="CAA89408.1"/>
    <property type="molecule type" value="Genomic_DNA"/>
</dbReference>
<dbReference type="EMBL" id="BK006943">
    <property type="protein sequence ID" value="DAA08687.2"/>
    <property type="status" value="ALT_FRAME"/>
    <property type="molecule type" value="Genomic_DNA"/>
</dbReference>
<dbReference type="PIR" id="JC1482">
    <property type="entry name" value="JC1482"/>
</dbReference>
<dbReference type="PIR" id="S31261">
    <property type="entry name" value="S31261"/>
</dbReference>
<dbReference type="RefSeq" id="NP_012422.2">
    <property type="nucleotide sequence ID" value="NM_001181547.2"/>
</dbReference>
<dbReference type="SMR" id="P47023"/>
<dbReference type="BioGRID" id="33641">
    <property type="interactions" value="6"/>
</dbReference>
<dbReference type="DIP" id="DIP-7219N"/>
<dbReference type="FunCoup" id="P47023">
    <property type="interactions" value="19"/>
</dbReference>
<dbReference type="IntAct" id="P47023">
    <property type="interactions" value="7"/>
</dbReference>
<dbReference type="MINT" id="P47023"/>
<dbReference type="GeneID" id="853329"/>
<dbReference type="KEGG" id="sce:YJL114W"/>
<dbReference type="AGR" id="SGD:S000003650"/>
<dbReference type="SGD" id="S000003650">
    <property type="gene designation" value="YJL114W"/>
</dbReference>
<dbReference type="InParanoid" id="P47023"/>
<dbReference type="OrthoDB" id="4068312at2759"/>
<dbReference type="Proteomes" id="UP000002311">
    <property type="component" value="Chromosome X"/>
</dbReference>
<dbReference type="RNAct" id="P47023">
    <property type="molecule type" value="protein"/>
</dbReference>
<dbReference type="GO" id="GO:0075523">
    <property type="term" value="P:viral translational frameshifting"/>
    <property type="evidence" value="ECO:0007669"/>
    <property type="project" value="UniProtKB-KW"/>
</dbReference>
<reference key="1">
    <citation type="journal article" date="1992" name="J. Biol. Chem.">
        <title>Ty4, a new retrotransposon from Saccharomyces cerevisiae, flanked by tau-elements.</title>
        <authorList>
            <person name="Janetzky B."/>
            <person name="Lehle L."/>
        </authorList>
    </citation>
    <scope>NUCLEOTIDE SEQUENCE [GENOMIC DNA]</scope>
    <source>
        <strain>ATCC 204508 / S288c</strain>
    </source>
</reference>
<reference key="2">
    <citation type="journal article" date="1996" name="Yeast">
        <title>Sequencing analysis of a 40.2 kb fragment of yeast chromosome X reveals 19 open reading frames including URA2 (5' end), TRK1, PBS2, SPT10, GCD14, RPE1, PHO86, NCA3, ASF1, CCT7, GZF3, two tRNA genes, three remnant delta elements and a Ty4 transposon.</title>
        <authorList>
            <person name="Cziepluch C."/>
            <person name="Kordes E."/>
            <person name="Pujol A."/>
            <person name="Jauniaux J.-C."/>
        </authorList>
    </citation>
    <scope>NUCLEOTIDE SEQUENCE [GENOMIC DNA]</scope>
    <source>
        <strain>ATCC 96604 / S288c / FY1679</strain>
    </source>
</reference>
<reference key="3">
    <citation type="journal article" date="1996" name="EMBO J.">
        <title>Complete nucleotide sequence of Saccharomyces cerevisiae chromosome X.</title>
        <authorList>
            <person name="Galibert F."/>
            <person name="Alexandraki D."/>
            <person name="Baur A."/>
            <person name="Boles E."/>
            <person name="Chalwatzis N."/>
            <person name="Chuat J.-C."/>
            <person name="Coster F."/>
            <person name="Cziepluch C."/>
            <person name="de Haan M."/>
            <person name="Domdey H."/>
            <person name="Durand P."/>
            <person name="Entian K.-D."/>
            <person name="Gatius M."/>
            <person name="Goffeau A."/>
            <person name="Grivell L.A."/>
            <person name="Hennemann A."/>
            <person name="Herbert C.J."/>
            <person name="Heumann K."/>
            <person name="Hilger F."/>
            <person name="Hollenberg C.P."/>
            <person name="Huang M.-E."/>
            <person name="Jacq C."/>
            <person name="Jauniaux J.-C."/>
            <person name="Katsoulou C."/>
            <person name="Kirchrath L."/>
            <person name="Kleine K."/>
            <person name="Kordes E."/>
            <person name="Koetter P."/>
            <person name="Liebl S."/>
            <person name="Louis E.J."/>
            <person name="Manus V."/>
            <person name="Mewes H.-W."/>
            <person name="Miosga T."/>
            <person name="Obermaier B."/>
            <person name="Perea J."/>
            <person name="Pohl T.M."/>
            <person name="Portetelle D."/>
            <person name="Pujol A."/>
            <person name="Purnelle B."/>
            <person name="Ramezani Rad M."/>
            <person name="Rasmussen S.W."/>
            <person name="Rose M."/>
            <person name="Rossau R."/>
            <person name="Schaaff-Gerstenschlaeger I."/>
            <person name="Smits P.H.M."/>
            <person name="Scarcez T."/>
            <person name="Soriano N."/>
            <person name="To Van D."/>
            <person name="Tzermia M."/>
            <person name="Van Broekhoven A."/>
            <person name="Vandenbol M."/>
            <person name="Wedler H."/>
            <person name="von Wettstein D."/>
            <person name="Wambutt R."/>
            <person name="Zagulski M."/>
            <person name="Zollner A."/>
            <person name="Karpfinger-Hartl L."/>
        </authorList>
    </citation>
    <scope>NUCLEOTIDE SEQUENCE [LARGE SCALE GENOMIC DNA]</scope>
    <source>
        <strain>ATCC 204508 / S288c</strain>
    </source>
</reference>
<reference key="4">
    <citation type="journal article" date="2014" name="G3 (Bethesda)">
        <title>The reference genome sequence of Saccharomyces cerevisiae: Then and now.</title>
        <authorList>
            <person name="Engel S.R."/>
            <person name="Dietrich F.S."/>
            <person name="Fisk D.G."/>
            <person name="Binkley G."/>
            <person name="Balakrishnan R."/>
            <person name="Costanzo M.C."/>
            <person name="Dwight S.S."/>
            <person name="Hitz B.C."/>
            <person name="Karra K."/>
            <person name="Nash R.S."/>
            <person name="Weng S."/>
            <person name="Wong E.D."/>
            <person name="Lloyd P."/>
            <person name="Skrzypek M.S."/>
            <person name="Miyasato S.R."/>
            <person name="Simison M."/>
            <person name="Cherry J.M."/>
        </authorList>
    </citation>
    <scope>GENOME REANNOTATION</scope>
    <scope>SEQUENCE REVISION TO 226 AND 240</scope>
    <source>
        <strain>ATCC 204508 / S288c</strain>
    </source>
</reference>
<reference key="5">
    <citation type="journal article" date="1998" name="Genome Res.">
        <title>Transposable elements and genome organization: a comprehensive survey of retrotransposons revealed by the complete Saccharomyces cerevisiae genome sequence.</title>
        <authorList>
            <person name="Kim J.M."/>
            <person name="Vanguri S."/>
            <person name="Boeke J.D."/>
            <person name="Gabriel A."/>
            <person name="Voytas D.F."/>
        </authorList>
    </citation>
    <scope>NOMENCLATURE</scope>
</reference>
<reference key="6">
    <citation type="journal article" date="2005" name="Cytogenet. Genome Res.">
        <title>Happy together: the life and times of Ty retrotransposons and their hosts.</title>
        <authorList>
            <person name="Lesage P."/>
            <person name="Todeschini A.L."/>
        </authorList>
    </citation>
    <scope>REVIEW</scope>
</reference>
<accession>P47023</accession>
<accession>D6VW71</accession>
<gene>
    <name type="primary">TY4A-J</name>
    <name type="synonym">YJLWTy4-1 GAG</name>
    <name type="ordered locus">YJL114W</name>
    <name type="ORF">J0775</name>
</gene>
<name>YJ41A_YEAST</name>
<organism>
    <name type="scientific">Saccharomyces cerevisiae (strain ATCC 204508 / S288c)</name>
    <name type="common">Baker's yeast</name>
    <dbReference type="NCBI Taxonomy" id="559292"/>
    <lineage>
        <taxon>Eukaryota</taxon>
        <taxon>Fungi</taxon>
        <taxon>Dikarya</taxon>
        <taxon>Ascomycota</taxon>
        <taxon>Saccharomycotina</taxon>
        <taxon>Saccharomycetes</taxon>
        <taxon>Saccharomycetales</taxon>
        <taxon>Saccharomycetaceae</taxon>
        <taxon>Saccharomyces</taxon>
    </lineage>
</organism>
<keyword id="KW-0175">Coiled coil</keyword>
<keyword id="KW-1185">Reference proteome</keyword>
<keyword id="KW-0688">Ribosomal frameshifting</keyword>
<keyword id="KW-0814">Transposable element</keyword>
<evidence type="ECO:0000250" key="1"/>
<evidence type="ECO:0000255" key="2"/>
<evidence type="ECO:0000256" key="3">
    <source>
        <dbReference type="SAM" id="MobiDB-lite"/>
    </source>
</evidence>
<evidence type="ECO:0000305" key="4"/>